<name>COMB_CLOBB</name>
<accession>B2THU3</accession>
<evidence type="ECO:0000255" key="1">
    <source>
        <dbReference type="HAMAP-Rule" id="MF_00490"/>
    </source>
</evidence>
<organism>
    <name type="scientific">Clostridium botulinum (strain Eklund 17B / Type B)</name>
    <dbReference type="NCBI Taxonomy" id="935198"/>
    <lineage>
        <taxon>Bacteria</taxon>
        <taxon>Bacillati</taxon>
        <taxon>Bacillota</taxon>
        <taxon>Clostridia</taxon>
        <taxon>Eubacteriales</taxon>
        <taxon>Clostridiaceae</taxon>
        <taxon>Clostridium</taxon>
    </lineage>
</organism>
<gene>
    <name evidence="1" type="primary">comB</name>
    <name type="ordered locus">CLL_A0084</name>
</gene>
<reference key="1">
    <citation type="submission" date="2008-04" db="EMBL/GenBank/DDBJ databases">
        <title>Complete sequence of Clostridium botulinum strain Eklund.</title>
        <authorList>
            <person name="Brinkac L.M."/>
            <person name="Brown J.L."/>
            <person name="Bruce D."/>
            <person name="Detter C."/>
            <person name="Munk C."/>
            <person name="Smith L.A."/>
            <person name="Smith T.J."/>
            <person name="Sutton G."/>
            <person name="Brettin T.S."/>
        </authorList>
    </citation>
    <scope>NUCLEOTIDE SEQUENCE [LARGE SCALE GENOMIC DNA]</scope>
    <source>
        <strain>Eklund 17B / Type B</strain>
    </source>
</reference>
<comment type="catalytic activity">
    <reaction evidence="1">
        <text>(2R)-O-phospho-3-sulfolactate + H2O = (2R)-3-sulfolactate + phosphate</text>
        <dbReference type="Rhea" id="RHEA:23416"/>
        <dbReference type="ChEBI" id="CHEBI:15377"/>
        <dbReference type="ChEBI" id="CHEBI:15597"/>
        <dbReference type="ChEBI" id="CHEBI:43474"/>
        <dbReference type="ChEBI" id="CHEBI:58738"/>
        <dbReference type="EC" id="3.1.3.71"/>
    </reaction>
</comment>
<comment type="cofactor">
    <cofactor evidence="1">
        <name>Mg(2+)</name>
        <dbReference type="ChEBI" id="CHEBI:18420"/>
    </cofactor>
</comment>
<comment type="similarity">
    <text evidence="1">Belongs to the ComB family.</text>
</comment>
<proteinExistence type="inferred from homology"/>
<dbReference type="EC" id="3.1.3.71" evidence="1"/>
<dbReference type="EMBL" id="CP001056">
    <property type="protein sequence ID" value="ACD24349.1"/>
    <property type="molecule type" value="Genomic_DNA"/>
</dbReference>
<dbReference type="SMR" id="B2THU3"/>
<dbReference type="KEGG" id="cbk:CLL_A0084"/>
<dbReference type="PATRIC" id="fig|935198.13.peg.75"/>
<dbReference type="HOGENOM" id="CLU_070028_0_0_9"/>
<dbReference type="Proteomes" id="UP000001195">
    <property type="component" value="Chromosome"/>
</dbReference>
<dbReference type="GO" id="GO:0050532">
    <property type="term" value="F:2-phosphosulfolactate phosphatase activity"/>
    <property type="evidence" value="ECO:0007669"/>
    <property type="project" value="UniProtKB-UniRule"/>
</dbReference>
<dbReference type="GO" id="GO:0000287">
    <property type="term" value="F:magnesium ion binding"/>
    <property type="evidence" value="ECO:0007669"/>
    <property type="project" value="UniProtKB-UniRule"/>
</dbReference>
<dbReference type="GO" id="GO:0050545">
    <property type="term" value="F:sulfopyruvate decarboxylase activity"/>
    <property type="evidence" value="ECO:0007669"/>
    <property type="project" value="TreeGrafter"/>
</dbReference>
<dbReference type="FunFam" id="3.90.1560.10:FF:000001">
    <property type="entry name" value="Probable 2-phosphosulfolactate phosphatase"/>
    <property type="match status" value="1"/>
</dbReference>
<dbReference type="Gene3D" id="3.90.1560.10">
    <property type="entry name" value="ComB-like"/>
    <property type="match status" value="1"/>
</dbReference>
<dbReference type="HAMAP" id="MF_00490">
    <property type="entry name" value="ComB"/>
    <property type="match status" value="1"/>
</dbReference>
<dbReference type="InterPro" id="IPR005238">
    <property type="entry name" value="ComB-like"/>
</dbReference>
<dbReference type="InterPro" id="IPR036702">
    <property type="entry name" value="ComB-like_sf"/>
</dbReference>
<dbReference type="NCBIfam" id="NF002055">
    <property type="entry name" value="PRK00886.1-4"/>
    <property type="match status" value="1"/>
</dbReference>
<dbReference type="PANTHER" id="PTHR37311">
    <property type="entry name" value="2-PHOSPHOSULFOLACTATE PHOSPHATASE-RELATED"/>
    <property type="match status" value="1"/>
</dbReference>
<dbReference type="PANTHER" id="PTHR37311:SF1">
    <property type="entry name" value="2-PHOSPHOSULFOLACTATE PHOSPHATASE-RELATED"/>
    <property type="match status" value="1"/>
</dbReference>
<dbReference type="Pfam" id="PF04029">
    <property type="entry name" value="2-ph_phosp"/>
    <property type="match status" value="1"/>
</dbReference>
<dbReference type="SUPFAM" id="SSF142823">
    <property type="entry name" value="ComB-like"/>
    <property type="match status" value="1"/>
</dbReference>
<sequence>MKVDVVISADYISDDIVKDKVVVVIDMFRATSVITTAINNGCQKIIPYLTVEETLEEAKKYDNNEVILGGERRAVKIEGFDLSNSPLEYTEEVVKNKTVLMTTTNGTRALTKCLLGKKIIIAAMINAEAVAKKLLEFNDDIVIVNAGTNGEFSMDDYICGGYIINTMLKEKSNIELTDIAKTSNMIYESNKDIINYVKEARHYSVMRSLKLDNDIEYCIKKSIIDVVPIYDGDKIIKL</sequence>
<keyword id="KW-0378">Hydrolase</keyword>
<keyword id="KW-0460">Magnesium</keyword>
<feature type="chain" id="PRO_1000126223" description="Probable 2-phosphosulfolactate phosphatase">
    <location>
        <begin position="1"/>
        <end position="238"/>
    </location>
</feature>
<protein>
    <recommendedName>
        <fullName evidence="1">Probable 2-phosphosulfolactate phosphatase</fullName>
        <ecNumber evidence="1">3.1.3.71</ecNumber>
    </recommendedName>
</protein>